<gene>
    <name type="primary">COPG2</name>
</gene>
<protein>
    <recommendedName>
        <fullName>Coatomer subunit gamma-2</fullName>
    </recommendedName>
    <alternativeName>
        <fullName>Gamma-2-coat protein</fullName>
        <shortName>Gamma-2-COP</shortName>
    </alternativeName>
</protein>
<evidence type="ECO:0000250" key="1"/>
<evidence type="ECO:0000250" key="2">
    <source>
        <dbReference type="UniProtKB" id="Q9Y678"/>
    </source>
</evidence>
<evidence type="ECO:0000256" key="3">
    <source>
        <dbReference type="SAM" id="MobiDB-lite"/>
    </source>
</evidence>
<evidence type="ECO:0000269" key="4">
    <source>
    </source>
</evidence>
<evidence type="ECO:0000269" key="5">
    <source>
    </source>
</evidence>
<evidence type="ECO:0000303" key="6">
    <source>
    </source>
</evidence>
<evidence type="ECO:0000305" key="7"/>
<dbReference type="EMBL" id="AF207598">
    <property type="protein sequence ID" value="AAF19433.1"/>
    <property type="molecule type" value="mRNA"/>
</dbReference>
<dbReference type="EMBL" id="AF157833">
    <property type="protein sequence ID" value="AAF14271.1"/>
    <property type="molecule type" value="mRNA"/>
</dbReference>
<dbReference type="EMBL" id="AB047847">
    <property type="protein sequence ID" value="BAB17658.1"/>
    <property type="molecule type" value="mRNA"/>
</dbReference>
<dbReference type="EMBL" id="AK291409">
    <property type="protein sequence ID" value="BAF84098.1"/>
    <property type="molecule type" value="mRNA"/>
</dbReference>
<dbReference type="EMBL" id="AC090520">
    <property type="status" value="NOT_ANNOTATED_CDS"/>
    <property type="molecule type" value="Genomic_DNA"/>
</dbReference>
<dbReference type="EMBL" id="AC009274">
    <property type="status" value="NOT_ANNOTATED_CDS"/>
    <property type="molecule type" value="Genomic_DNA"/>
</dbReference>
<dbReference type="EMBL" id="AC007938">
    <property type="status" value="NOT_ANNOTATED_CDS"/>
    <property type="molecule type" value="Genomic_DNA"/>
</dbReference>
<dbReference type="EMBL" id="CH236950">
    <property type="protein sequence ID" value="EAL24085.1"/>
    <property type="molecule type" value="Genomic_DNA"/>
</dbReference>
<dbReference type="EMBL" id="CH471070">
    <property type="protein sequence ID" value="EAW83769.1"/>
    <property type="molecule type" value="Genomic_DNA"/>
</dbReference>
<dbReference type="EMBL" id="BC017443">
    <property type="protein sequence ID" value="AAH17443.2"/>
    <property type="molecule type" value="mRNA"/>
</dbReference>
<dbReference type="EMBL" id="BC110796">
    <property type="protein sequence ID" value="AAI10797.1"/>
    <property type="molecule type" value="mRNA"/>
</dbReference>
<dbReference type="CCDS" id="CCDS75662.1">
    <molecule id="Q9UBF2-1"/>
</dbReference>
<dbReference type="CCDS" id="CCDS78275.1">
    <molecule id="Q9UBF2-2"/>
</dbReference>
<dbReference type="RefSeq" id="NP_001276962.1">
    <molecule id="Q9UBF2-2"/>
    <property type="nucleotide sequence ID" value="NM_001290033.2"/>
</dbReference>
<dbReference type="RefSeq" id="NP_036265.3">
    <molecule id="Q9UBF2-1"/>
    <property type="nucleotide sequence ID" value="NM_012133.6"/>
</dbReference>
<dbReference type="SMR" id="Q9UBF2"/>
<dbReference type="BioGRID" id="117926">
    <property type="interactions" value="173"/>
</dbReference>
<dbReference type="ComplexPortal" id="CPX-7969">
    <property type="entry name" value="COPI vesicle coat complex, COPG2-COPZ1 variant"/>
</dbReference>
<dbReference type="FunCoup" id="Q9UBF2">
    <property type="interactions" value="3098"/>
</dbReference>
<dbReference type="IntAct" id="Q9UBF2">
    <property type="interactions" value="91"/>
</dbReference>
<dbReference type="MINT" id="Q9UBF2"/>
<dbReference type="STRING" id="9606.ENSP00000402346"/>
<dbReference type="GlyGen" id="Q9UBF2">
    <property type="glycosylation" value="1 site, 1 O-linked glycan (1 site)"/>
</dbReference>
<dbReference type="iPTMnet" id="Q9UBF2"/>
<dbReference type="MetOSite" id="Q9UBF2"/>
<dbReference type="PhosphoSitePlus" id="Q9UBF2"/>
<dbReference type="SwissPalm" id="Q9UBF2"/>
<dbReference type="BioMuta" id="COPG2"/>
<dbReference type="jPOST" id="Q9UBF2"/>
<dbReference type="MassIVE" id="Q9UBF2"/>
<dbReference type="PaxDb" id="9606-ENSP00000402346"/>
<dbReference type="PeptideAtlas" id="Q9UBF2"/>
<dbReference type="ProteomicsDB" id="83955">
    <molecule id="Q9UBF2-1"/>
</dbReference>
<dbReference type="Pumba" id="Q9UBF2"/>
<dbReference type="Antibodypedia" id="69166">
    <property type="antibodies" value="87 antibodies from 21 providers"/>
</dbReference>
<dbReference type="DNASU" id="26958"/>
<dbReference type="Ensembl" id="ENST00000330992.8">
    <molecule id="Q9UBF2-2"/>
    <property type="protein sequence ID" value="ENSP00000331218.8"/>
    <property type="gene ID" value="ENSG00000158623.14"/>
</dbReference>
<dbReference type="Ensembl" id="ENST00000425248.5">
    <molecule id="Q9UBF2-1"/>
    <property type="protein sequence ID" value="ENSP00000402346.2"/>
    <property type="gene ID" value="ENSG00000158623.14"/>
</dbReference>
<dbReference type="GeneID" id="26958"/>
<dbReference type="KEGG" id="hsa:26958"/>
<dbReference type="MANE-Select" id="ENST00000425248.5">
    <property type="protein sequence ID" value="ENSP00000402346.2"/>
    <property type="RefSeq nucleotide sequence ID" value="NM_012133.6"/>
    <property type="RefSeq protein sequence ID" value="NP_036265.3"/>
</dbReference>
<dbReference type="UCSC" id="uc033ahl.2">
    <molecule id="Q9UBF2-1"/>
    <property type="organism name" value="human"/>
</dbReference>
<dbReference type="AGR" id="HGNC:2237"/>
<dbReference type="CTD" id="26958"/>
<dbReference type="DisGeNET" id="26958"/>
<dbReference type="GeneCards" id="COPG2"/>
<dbReference type="HGNC" id="HGNC:2237">
    <property type="gene designation" value="COPG2"/>
</dbReference>
<dbReference type="HPA" id="ENSG00000158623">
    <property type="expression patterns" value="Low tissue specificity"/>
</dbReference>
<dbReference type="MIM" id="604355">
    <property type="type" value="gene"/>
</dbReference>
<dbReference type="neXtProt" id="NX_Q9UBF2"/>
<dbReference type="OpenTargets" id="ENSG00000158623"/>
<dbReference type="PharmGKB" id="PA26753"/>
<dbReference type="VEuPathDB" id="HostDB:ENSG00000158623"/>
<dbReference type="eggNOG" id="KOG1078">
    <property type="taxonomic scope" value="Eukaryota"/>
</dbReference>
<dbReference type="GeneTree" id="ENSGT00390000016313"/>
<dbReference type="HOGENOM" id="CLU_010353_2_0_1"/>
<dbReference type="InParanoid" id="Q9UBF2"/>
<dbReference type="OMA" id="DFIEDCE"/>
<dbReference type="OrthoDB" id="1074925at2759"/>
<dbReference type="PAN-GO" id="Q9UBF2">
    <property type="GO annotations" value="8 GO annotations based on evolutionary models"/>
</dbReference>
<dbReference type="PhylomeDB" id="Q9UBF2"/>
<dbReference type="PathwayCommons" id="Q9UBF2"/>
<dbReference type="Reactome" id="R-HSA-6807878">
    <property type="pathway name" value="COPI-mediated anterograde transport"/>
</dbReference>
<dbReference type="Reactome" id="R-HSA-6811434">
    <property type="pathway name" value="COPI-dependent Golgi-to-ER retrograde traffic"/>
</dbReference>
<dbReference type="SignaLink" id="Q9UBF2"/>
<dbReference type="BioGRID-ORCS" id="26958">
    <property type="hits" value="7 hits in 311 CRISPR screens"/>
</dbReference>
<dbReference type="ChiTaRS" id="COPG2">
    <property type="organism name" value="human"/>
</dbReference>
<dbReference type="GeneWiki" id="COPG2"/>
<dbReference type="GenomeRNAi" id="26958"/>
<dbReference type="Pharos" id="Q9UBF2">
    <property type="development level" value="Tbio"/>
</dbReference>
<dbReference type="PRO" id="PR:Q9UBF2"/>
<dbReference type="Proteomes" id="UP000005640">
    <property type="component" value="Chromosome 7"/>
</dbReference>
<dbReference type="RNAct" id="Q9UBF2">
    <property type="molecule type" value="protein"/>
</dbReference>
<dbReference type="Bgee" id="ENSG00000158623">
    <property type="expression patterns" value="Expressed in cortical plate and 135 other cell types or tissues"/>
</dbReference>
<dbReference type="ExpressionAtlas" id="Q9UBF2">
    <property type="expression patterns" value="baseline and differential"/>
</dbReference>
<dbReference type="GO" id="GO:0030126">
    <property type="term" value="C:COPI vesicle coat"/>
    <property type="evidence" value="ECO:0000314"/>
    <property type="project" value="UniProtKB"/>
</dbReference>
<dbReference type="GO" id="GO:0005829">
    <property type="term" value="C:cytosol"/>
    <property type="evidence" value="ECO:0000304"/>
    <property type="project" value="Reactome"/>
</dbReference>
<dbReference type="GO" id="GO:0005783">
    <property type="term" value="C:endoplasmic reticulum"/>
    <property type="evidence" value="ECO:0000318"/>
    <property type="project" value="GO_Central"/>
</dbReference>
<dbReference type="GO" id="GO:0005789">
    <property type="term" value="C:endoplasmic reticulum membrane"/>
    <property type="evidence" value="ECO:0000304"/>
    <property type="project" value="Reactome"/>
</dbReference>
<dbReference type="GO" id="GO:0005793">
    <property type="term" value="C:endoplasmic reticulum-Golgi intermediate compartment"/>
    <property type="evidence" value="ECO:0000318"/>
    <property type="project" value="GO_Central"/>
</dbReference>
<dbReference type="GO" id="GO:0000139">
    <property type="term" value="C:Golgi membrane"/>
    <property type="evidence" value="ECO:0000318"/>
    <property type="project" value="GO_Central"/>
</dbReference>
<dbReference type="GO" id="GO:0030426">
    <property type="term" value="C:growth cone"/>
    <property type="evidence" value="ECO:0007669"/>
    <property type="project" value="Ensembl"/>
</dbReference>
<dbReference type="GO" id="GO:0030133">
    <property type="term" value="C:transport vesicle"/>
    <property type="evidence" value="ECO:0000304"/>
    <property type="project" value="Reactome"/>
</dbReference>
<dbReference type="GO" id="GO:0005198">
    <property type="term" value="F:structural molecule activity"/>
    <property type="evidence" value="ECO:0007669"/>
    <property type="project" value="InterPro"/>
</dbReference>
<dbReference type="GO" id="GO:0006888">
    <property type="term" value="P:endoplasmic reticulum to Golgi vesicle-mediated transport"/>
    <property type="evidence" value="ECO:0000318"/>
    <property type="project" value="GO_Central"/>
</dbReference>
<dbReference type="GO" id="GO:0006891">
    <property type="term" value="P:intra-Golgi vesicle-mediated transport"/>
    <property type="evidence" value="ECO:0000314"/>
    <property type="project" value="UniProtKB"/>
</dbReference>
<dbReference type="GO" id="GO:0006886">
    <property type="term" value="P:intracellular protein transport"/>
    <property type="evidence" value="ECO:0007669"/>
    <property type="project" value="InterPro"/>
</dbReference>
<dbReference type="GO" id="GO:0072384">
    <property type="term" value="P:organelle transport along microtubule"/>
    <property type="evidence" value="ECO:0000318"/>
    <property type="project" value="GO_Central"/>
</dbReference>
<dbReference type="GO" id="GO:0009306">
    <property type="term" value="P:protein secretion"/>
    <property type="evidence" value="ECO:0000318"/>
    <property type="project" value="GO_Central"/>
</dbReference>
<dbReference type="GO" id="GO:0006890">
    <property type="term" value="P:retrograde vesicle-mediated transport, Golgi to endoplasmic reticulum"/>
    <property type="evidence" value="ECO:0000304"/>
    <property type="project" value="UniProtKB"/>
</dbReference>
<dbReference type="FunFam" id="1.25.10.10:FF:000038">
    <property type="entry name" value="Coatomer subunit gamma"/>
    <property type="match status" value="1"/>
</dbReference>
<dbReference type="FunFam" id="1.25.10.10:FF:000071">
    <property type="entry name" value="Coatomer subunit gamma"/>
    <property type="match status" value="1"/>
</dbReference>
<dbReference type="FunFam" id="2.60.40.1480:FF:000004">
    <property type="entry name" value="Coatomer subunit gamma"/>
    <property type="match status" value="1"/>
</dbReference>
<dbReference type="FunFam" id="3.30.310.10:FF:000006">
    <property type="entry name" value="Coatomer subunit gamma"/>
    <property type="match status" value="1"/>
</dbReference>
<dbReference type="Gene3D" id="2.60.40.1480">
    <property type="entry name" value="Coatomer, gamma subunit, appendage domain"/>
    <property type="match status" value="1"/>
</dbReference>
<dbReference type="Gene3D" id="1.25.10.10">
    <property type="entry name" value="Leucine-rich Repeat Variant"/>
    <property type="match status" value="2"/>
</dbReference>
<dbReference type="Gene3D" id="3.30.310.10">
    <property type="entry name" value="TATA-Binding Protein"/>
    <property type="match status" value="1"/>
</dbReference>
<dbReference type="InterPro" id="IPR011989">
    <property type="entry name" value="ARM-like"/>
</dbReference>
<dbReference type="InterPro" id="IPR016024">
    <property type="entry name" value="ARM-type_fold"/>
</dbReference>
<dbReference type="InterPro" id="IPR002553">
    <property type="entry name" value="Clathrin/coatomer_adapt-like_N"/>
</dbReference>
<dbReference type="InterPro" id="IPR013041">
    <property type="entry name" value="Clathrin_app_Ig-like_sf"/>
</dbReference>
<dbReference type="InterPro" id="IPR009028">
    <property type="entry name" value="Coatomer/calthrin_app_sub_C"/>
</dbReference>
<dbReference type="InterPro" id="IPR032154">
    <property type="entry name" value="Coatomer_g_Cpla"/>
</dbReference>
<dbReference type="InterPro" id="IPR017106">
    <property type="entry name" value="Coatomer_gsu"/>
</dbReference>
<dbReference type="InterPro" id="IPR013040">
    <property type="entry name" value="Coatomer_gsu_app_Ig-like_dom"/>
</dbReference>
<dbReference type="InterPro" id="IPR037067">
    <property type="entry name" value="Coatomer_gsu_app_sf"/>
</dbReference>
<dbReference type="InterPro" id="IPR012295">
    <property type="entry name" value="TBP_dom_sf"/>
</dbReference>
<dbReference type="PANTHER" id="PTHR10261">
    <property type="entry name" value="COATOMER SUBUNIT GAMMA"/>
    <property type="match status" value="1"/>
</dbReference>
<dbReference type="PANTHER" id="PTHR10261:SF4">
    <property type="entry name" value="COATOMER SUBUNIT GAMMA-2"/>
    <property type="match status" value="1"/>
</dbReference>
<dbReference type="Pfam" id="PF01602">
    <property type="entry name" value="Adaptin_N"/>
    <property type="match status" value="1"/>
</dbReference>
<dbReference type="Pfam" id="PF16381">
    <property type="entry name" value="Coatomer_g_Cpla"/>
    <property type="match status" value="1"/>
</dbReference>
<dbReference type="Pfam" id="PF08752">
    <property type="entry name" value="COP-gamma_platf"/>
    <property type="match status" value="1"/>
</dbReference>
<dbReference type="PIRSF" id="PIRSF037093">
    <property type="entry name" value="Coatomer_gamma_subunit"/>
    <property type="match status" value="1"/>
</dbReference>
<dbReference type="SUPFAM" id="SSF48371">
    <property type="entry name" value="ARM repeat"/>
    <property type="match status" value="1"/>
</dbReference>
<dbReference type="SUPFAM" id="SSF49348">
    <property type="entry name" value="Clathrin adaptor appendage domain"/>
    <property type="match status" value="1"/>
</dbReference>
<dbReference type="SUPFAM" id="SSF55711">
    <property type="entry name" value="Subdomain of clathrin and coatomer appendage domain"/>
    <property type="match status" value="1"/>
</dbReference>
<comment type="function">
    <text evidence="1">The coatomer is a cytosolic protein complex that binds to dilysine motifs and reversibly associates with Golgi non-clathrin-coated vesicles, which further mediate biosynthetic protein transport from the ER, via the Golgi up to the trans Golgi network. Coatomer complex is required for budding from Golgi membranes, and is essential for the retrograde Golgi-to-ER transport of dilysine-tagged proteins. In mammals, the coatomer can only be recruited by membranes associated to ADP-ribosylation factors (ARFs), which are small GTP-binding proteins; the complex also influences the Golgi structural integrity, as well as the processing, activity, and endocytic recycling of LDL receptors (By similarity).</text>
</comment>
<comment type="subunit">
    <text evidence="4 5">Oligomeric complex. Binds to CDC42. Interacts with JAGN1. Interacts with TMED10 (via cytoplasmic domain) (PubMed:11056392).</text>
</comment>
<comment type="subcellular location">
    <subcellularLocation>
        <location evidence="1">Cytoplasm</location>
        <location evidence="1">Cytosol</location>
    </subcellularLocation>
    <subcellularLocation>
        <location evidence="1">Golgi apparatus membrane</location>
        <topology evidence="1">Peripheral membrane protein</topology>
        <orientation evidence="1">Cytoplasmic side</orientation>
    </subcellularLocation>
    <subcellularLocation>
        <location evidence="1">Cytoplasmic vesicle</location>
        <location evidence="1">COPI-coated vesicle membrane</location>
        <topology evidence="1">Peripheral membrane protein</topology>
        <orientation evidence="1">Cytoplasmic side</orientation>
    </subcellularLocation>
    <text evidence="1">The coatomer is cytoplasmic or polymerized on the cytoplasmic side of the Golgi, as well as on the vesicles/buds originating from it. Tends to be more abundant in the trans-Golgi network compared to the cis-Golgi.</text>
</comment>
<comment type="alternative products">
    <event type="alternative splicing"/>
    <isoform>
        <id>Q9UBF2-1</id>
        <name>1</name>
        <sequence type="displayed"/>
    </isoform>
    <isoform>
        <id>Q9UBF2-2</id>
        <name>2</name>
        <sequence type="described" ref="VSP_055534 VSP_055535"/>
    </isoform>
</comment>
<comment type="similarity">
    <text evidence="7">Belongs to the COPG family.</text>
</comment>
<name>COPG2_HUMAN</name>
<keyword id="KW-0025">Alternative splicing</keyword>
<keyword id="KW-0963">Cytoplasm</keyword>
<keyword id="KW-0968">Cytoplasmic vesicle</keyword>
<keyword id="KW-0931">ER-Golgi transport</keyword>
<keyword id="KW-0333">Golgi apparatus</keyword>
<keyword id="KW-0472">Membrane</keyword>
<keyword id="KW-0597">Phosphoprotein</keyword>
<keyword id="KW-0653">Protein transport</keyword>
<keyword id="KW-1267">Proteomics identification</keyword>
<keyword id="KW-1185">Reference proteome</keyword>
<keyword id="KW-0677">Repeat</keyword>
<keyword id="KW-0813">Transport</keyword>
<organism>
    <name type="scientific">Homo sapiens</name>
    <name type="common">Human</name>
    <dbReference type="NCBI Taxonomy" id="9606"/>
    <lineage>
        <taxon>Eukaryota</taxon>
        <taxon>Metazoa</taxon>
        <taxon>Chordata</taxon>
        <taxon>Craniata</taxon>
        <taxon>Vertebrata</taxon>
        <taxon>Euteleostomi</taxon>
        <taxon>Mammalia</taxon>
        <taxon>Eutheria</taxon>
        <taxon>Euarchontoglires</taxon>
        <taxon>Primates</taxon>
        <taxon>Haplorrhini</taxon>
        <taxon>Catarrhini</taxon>
        <taxon>Hominidae</taxon>
        <taxon>Homo</taxon>
    </lineage>
</organism>
<proteinExistence type="evidence at protein level"/>
<sequence>MIKKFDKKDEESGSGSNPFQHLEKSAVLQEARIFNETPINPRRCLHILTKILYLLNQGEHFGTTEATEAFFAMTRLFQSNDQTLRRMCYLTIKEMATISEDVIIVTSSLTKDMTGKEDVYRGPAIRALCRITDGTMLQAIERYMKQAIVDKVSSVSSSALVSSLHMMKISYDVVKRWINEAQEAASSDNIMVQYHALGVLYHLRKNDRLAVSKMLNKFTKSGLKSQFAYCMLIRIASRLLKETEDGHESPLFDFIESCLRNKHEMVIYEAASAIIHLPNCTARELAPAVSVLQLFCSSPKPALRYAAVRTLNKVAMKHPSAVTACNLDLENLITDSNRSIATLAITTLLKTGSESSVDRLMKQISSFVSEISDEFKVVVVQAISALCQKYPRKHSVMMTFLSNMLRDDGGFEYKRAIVDCIISIVEENPESKEAGLAHLCEFIEDCEHTVLATKILHLLGKEGPRTPVPSKYIRFIFNRVVLENEAVRAAAVSALAKFGAQNESLLPSILVLLQRCMMDTDDEVRDRATFYLNVLQQRQMALNATYIFNGLTVSVPGMEKALHQYTLEPSEKPFDMKSIPLAMAPVFEQKAEITLVATKPEKLAPSRQDIFQEQLAAIPEFLNIGPLFKSSEPVQLTEAETEYFVRCIKHMFTNHIVFQFDCTNTLNDQLLEKVTVQMEPSDSYEVLSCIPAPSLPYNQPGICYTLVRLPDDDPTAVAGSFSCTMKFTVRDCDPNTGVPDEDGYDDEYVLEDLEVTVSDHIQKVLKPNFAAAWEEVGDTFEKEETFALSSTKTLEEAVNNIITFLGMQPCERSDKVPENKNSHSLYLAGIFRGGYDLLVRSRLALADGVTMQVTVRSKERTPVDVILASVG</sequence>
<accession>Q9UBF2</accession>
<accession>A6NH74</accession>
<accession>Q2NLA0</accession>
<accession>Q54AC3</accession>
<accession>Q8WVW8</accession>
<feature type="chain" id="PRO_0000193862" description="Coatomer subunit gamma-2">
    <location>
        <begin position="1"/>
        <end position="871"/>
    </location>
</feature>
<feature type="repeat" description="HEAT 1">
    <location>
        <begin position="64"/>
        <end position="101"/>
    </location>
</feature>
<feature type="repeat" description="HEAT 2">
    <location>
        <begin position="283"/>
        <end position="320"/>
    </location>
</feature>
<feature type="repeat" description="HEAT 3">
    <location>
        <begin position="321"/>
        <end position="355"/>
    </location>
</feature>
<feature type="repeat" description="HEAT 4">
    <location>
        <begin position="356"/>
        <end position="392"/>
    </location>
</feature>
<feature type="repeat" description="HEAT 5">
    <location>
        <begin position="395"/>
        <end position="430"/>
    </location>
</feature>
<feature type="repeat" description="HEAT 6">
    <location>
        <begin position="467"/>
        <end position="504"/>
    </location>
</feature>
<feature type="region of interest" description="Disordered" evidence="3">
    <location>
        <begin position="1"/>
        <end position="21"/>
    </location>
</feature>
<feature type="compositionally biased region" description="Basic and acidic residues" evidence="3">
    <location>
        <begin position="1"/>
        <end position="11"/>
    </location>
</feature>
<feature type="modified residue" description="Phosphothreonine" evidence="2">
    <location>
        <position position="594"/>
    </location>
</feature>
<feature type="splice variant" id="VSP_055534" description="In isoform 2." evidence="6">
    <original>VAGSFSCTMK</original>
    <variation>GTNPQKGGDT</variation>
    <location>
        <begin position="717"/>
        <end position="726"/>
    </location>
</feature>
<feature type="splice variant" id="VSP_055535" description="In isoform 2." evidence="6">
    <location>
        <begin position="727"/>
        <end position="871"/>
    </location>
</feature>
<feature type="sequence variant" id="VAR_060181" description="In dbSNP:rs10128.">
    <original>I</original>
    <variation>L</variation>
    <location>
        <position position="547"/>
    </location>
</feature>
<feature type="sequence variant" id="VAR_060182" description="In dbSNP:rs17333054.">
    <original>P</original>
    <variation>L</variation>
    <location>
        <position position="626"/>
    </location>
</feature>
<reference key="1">
    <citation type="submission" date="1999-11" db="EMBL/GenBank/DDBJ databases">
        <title>Newly identified coatomer subunits reveal multiple copy complexes acting in the early secretory pathway.</title>
        <authorList>
            <person name="Whitney J.A."/>
            <person name="Godzich M."/>
            <person name="Kreis T.E."/>
        </authorList>
    </citation>
    <scope>NUCLEOTIDE SEQUENCE [MRNA] (ISOFORM 1)</scope>
</reference>
<reference key="2">
    <citation type="journal article" date="1999" name="Hum. Mol. Genet.">
        <title>Gamma2-COP, a novel imprinted gene on chromosome 7q32, defines a new imprinting cluster in the human genome.</title>
        <authorList>
            <person name="Blagitko N."/>
            <person name="Schulz U."/>
            <person name="Schinzel A.A."/>
            <person name="Ropers H.-H."/>
            <person name="Kalscheuer V.M."/>
        </authorList>
    </citation>
    <scope>NUCLEOTIDE SEQUENCE [MRNA] (ISOFORM 1)</scope>
</reference>
<reference key="3">
    <citation type="journal article" date="2000" name="J. Biochem.">
        <title>Identification and characterization of novel isoforms of COP I subunits.</title>
        <authorList>
            <person name="Futatsumori M."/>
            <person name="Kasai K."/>
            <person name="Takatsu H."/>
            <person name="Shin H.-W."/>
            <person name="Nakayama K."/>
        </authorList>
    </citation>
    <scope>NUCLEOTIDE SEQUENCE [MRNA] (ISOFORM 1)</scope>
    <scope>INTERACTION WITH TMED10</scope>
</reference>
<reference key="4">
    <citation type="journal article" date="2004" name="Nat. Genet.">
        <title>Complete sequencing and characterization of 21,243 full-length human cDNAs.</title>
        <authorList>
            <person name="Ota T."/>
            <person name="Suzuki Y."/>
            <person name="Nishikawa T."/>
            <person name="Otsuki T."/>
            <person name="Sugiyama T."/>
            <person name="Irie R."/>
            <person name="Wakamatsu A."/>
            <person name="Hayashi K."/>
            <person name="Sato H."/>
            <person name="Nagai K."/>
            <person name="Kimura K."/>
            <person name="Makita H."/>
            <person name="Sekine M."/>
            <person name="Obayashi M."/>
            <person name="Nishi T."/>
            <person name="Shibahara T."/>
            <person name="Tanaka T."/>
            <person name="Ishii S."/>
            <person name="Yamamoto J."/>
            <person name="Saito K."/>
            <person name="Kawai Y."/>
            <person name="Isono Y."/>
            <person name="Nakamura Y."/>
            <person name="Nagahari K."/>
            <person name="Murakami K."/>
            <person name="Yasuda T."/>
            <person name="Iwayanagi T."/>
            <person name="Wagatsuma M."/>
            <person name="Shiratori A."/>
            <person name="Sudo H."/>
            <person name="Hosoiri T."/>
            <person name="Kaku Y."/>
            <person name="Kodaira H."/>
            <person name="Kondo H."/>
            <person name="Sugawara M."/>
            <person name="Takahashi M."/>
            <person name="Kanda K."/>
            <person name="Yokoi T."/>
            <person name="Furuya T."/>
            <person name="Kikkawa E."/>
            <person name="Omura Y."/>
            <person name="Abe K."/>
            <person name="Kamihara K."/>
            <person name="Katsuta N."/>
            <person name="Sato K."/>
            <person name="Tanikawa M."/>
            <person name="Yamazaki M."/>
            <person name="Ninomiya K."/>
            <person name="Ishibashi T."/>
            <person name="Yamashita H."/>
            <person name="Murakawa K."/>
            <person name="Fujimori K."/>
            <person name="Tanai H."/>
            <person name="Kimata M."/>
            <person name="Watanabe M."/>
            <person name="Hiraoka S."/>
            <person name="Chiba Y."/>
            <person name="Ishida S."/>
            <person name="Ono Y."/>
            <person name="Takiguchi S."/>
            <person name="Watanabe S."/>
            <person name="Yosida M."/>
            <person name="Hotuta T."/>
            <person name="Kusano J."/>
            <person name="Kanehori K."/>
            <person name="Takahashi-Fujii A."/>
            <person name="Hara H."/>
            <person name="Tanase T.-O."/>
            <person name="Nomura Y."/>
            <person name="Togiya S."/>
            <person name="Komai F."/>
            <person name="Hara R."/>
            <person name="Takeuchi K."/>
            <person name="Arita M."/>
            <person name="Imose N."/>
            <person name="Musashino K."/>
            <person name="Yuuki H."/>
            <person name="Oshima A."/>
            <person name="Sasaki N."/>
            <person name="Aotsuka S."/>
            <person name="Yoshikawa Y."/>
            <person name="Matsunawa H."/>
            <person name="Ichihara T."/>
            <person name="Shiohata N."/>
            <person name="Sano S."/>
            <person name="Moriya S."/>
            <person name="Momiyama H."/>
            <person name="Satoh N."/>
            <person name="Takami S."/>
            <person name="Terashima Y."/>
            <person name="Suzuki O."/>
            <person name="Nakagawa S."/>
            <person name="Senoh A."/>
            <person name="Mizoguchi H."/>
            <person name="Goto Y."/>
            <person name="Shimizu F."/>
            <person name="Wakebe H."/>
            <person name="Hishigaki H."/>
            <person name="Watanabe T."/>
            <person name="Sugiyama A."/>
            <person name="Takemoto M."/>
            <person name="Kawakami B."/>
            <person name="Yamazaki M."/>
            <person name="Watanabe K."/>
            <person name="Kumagai A."/>
            <person name="Itakura S."/>
            <person name="Fukuzumi Y."/>
            <person name="Fujimori Y."/>
            <person name="Komiyama M."/>
            <person name="Tashiro H."/>
            <person name="Tanigami A."/>
            <person name="Fujiwara T."/>
            <person name="Ono T."/>
            <person name="Yamada K."/>
            <person name="Fujii Y."/>
            <person name="Ozaki K."/>
            <person name="Hirao M."/>
            <person name="Ohmori Y."/>
            <person name="Kawabata A."/>
            <person name="Hikiji T."/>
            <person name="Kobatake N."/>
            <person name="Inagaki H."/>
            <person name="Ikema Y."/>
            <person name="Okamoto S."/>
            <person name="Okitani R."/>
            <person name="Kawakami T."/>
            <person name="Noguchi S."/>
            <person name="Itoh T."/>
            <person name="Shigeta K."/>
            <person name="Senba T."/>
            <person name="Matsumura K."/>
            <person name="Nakajima Y."/>
            <person name="Mizuno T."/>
            <person name="Morinaga M."/>
            <person name="Sasaki M."/>
            <person name="Togashi T."/>
            <person name="Oyama M."/>
            <person name="Hata H."/>
            <person name="Watanabe M."/>
            <person name="Komatsu T."/>
            <person name="Mizushima-Sugano J."/>
            <person name="Satoh T."/>
            <person name="Shirai Y."/>
            <person name="Takahashi Y."/>
            <person name="Nakagawa K."/>
            <person name="Okumura K."/>
            <person name="Nagase T."/>
            <person name="Nomura N."/>
            <person name="Kikuchi H."/>
            <person name="Masuho Y."/>
            <person name="Yamashita R."/>
            <person name="Nakai K."/>
            <person name="Yada T."/>
            <person name="Nakamura Y."/>
            <person name="Ohara O."/>
            <person name="Isogai T."/>
            <person name="Sugano S."/>
        </authorList>
    </citation>
    <scope>NUCLEOTIDE SEQUENCE [LARGE SCALE MRNA] (ISOFORM 1)</scope>
    <source>
        <tissue>Brain</tissue>
    </source>
</reference>
<reference key="5">
    <citation type="journal article" date="2003" name="Nature">
        <title>The DNA sequence of human chromosome 7.</title>
        <authorList>
            <person name="Hillier L.W."/>
            <person name="Fulton R.S."/>
            <person name="Fulton L.A."/>
            <person name="Graves T.A."/>
            <person name="Pepin K.H."/>
            <person name="Wagner-McPherson C."/>
            <person name="Layman D."/>
            <person name="Maas J."/>
            <person name="Jaeger S."/>
            <person name="Walker R."/>
            <person name="Wylie K."/>
            <person name="Sekhon M."/>
            <person name="Becker M.C."/>
            <person name="O'Laughlin M.D."/>
            <person name="Schaller M.E."/>
            <person name="Fewell G.A."/>
            <person name="Delehaunty K.D."/>
            <person name="Miner T.L."/>
            <person name="Nash W.E."/>
            <person name="Cordes M."/>
            <person name="Du H."/>
            <person name="Sun H."/>
            <person name="Edwards J."/>
            <person name="Bradshaw-Cordum H."/>
            <person name="Ali J."/>
            <person name="Andrews S."/>
            <person name="Isak A."/>
            <person name="Vanbrunt A."/>
            <person name="Nguyen C."/>
            <person name="Du F."/>
            <person name="Lamar B."/>
            <person name="Courtney L."/>
            <person name="Kalicki J."/>
            <person name="Ozersky P."/>
            <person name="Bielicki L."/>
            <person name="Scott K."/>
            <person name="Holmes A."/>
            <person name="Harkins R."/>
            <person name="Harris A."/>
            <person name="Strong C.M."/>
            <person name="Hou S."/>
            <person name="Tomlinson C."/>
            <person name="Dauphin-Kohlberg S."/>
            <person name="Kozlowicz-Reilly A."/>
            <person name="Leonard S."/>
            <person name="Rohlfing T."/>
            <person name="Rock S.M."/>
            <person name="Tin-Wollam A.-M."/>
            <person name="Abbott A."/>
            <person name="Minx P."/>
            <person name="Maupin R."/>
            <person name="Strowmatt C."/>
            <person name="Latreille P."/>
            <person name="Miller N."/>
            <person name="Johnson D."/>
            <person name="Murray J."/>
            <person name="Woessner J.P."/>
            <person name="Wendl M.C."/>
            <person name="Yang S.-P."/>
            <person name="Schultz B.R."/>
            <person name="Wallis J.W."/>
            <person name="Spieth J."/>
            <person name="Bieri T.A."/>
            <person name="Nelson J.O."/>
            <person name="Berkowicz N."/>
            <person name="Wohldmann P.E."/>
            <person name="Cook L.L."/>
            <person name="Hickenbotham M.T."/>
            <person name="Eldred J."/>
            <person name="Williams D."/>
            <person name="Bedell J.A."/>
            <person name="Mardis E.R."/>
            <person name="Clifton S.W."/>
            <person name="Chissoe S.L."/>
            <person name="Marra M.A."/>
            <person name="Raymond C."/>
            <person name="Haugen E."/>
            <person name="Gillett W."/>
            <person name="Zhou Y."/>
            <person name="James R."/>
            <person name="Phelps K."/>
            <person name="Iadanoto S."/>
            <person name="Bubb K."/>
            <person name="Simms E."/>
            <person name="Levy R."/>
            <person name="Clendenning J."/>
            <person name="Kaul R."/>
            <person name="Kent W.J."/>
            <person name="Furey T.S."/>
            <person name="Baertsch R.A."/>
            <person name="Brent M.R."/>
            <person name="Keibler E."/>
            <person name="Flicek P."/>
            <person name="Bork P."/>
            <person name="Suyama M."/>
            <person name="Bailey J.A."/>
            <person name="Portnoy M.E."/>
            <person name="Torrents D."/>
            <person name="Chinwalla A.T."/>
            <person name="Gish W.R."/>
            <person name="Eddy S.R."/>
            <person name="McPherson J.D."/>
            <person name="Olson M.V."/>
            <person name="Eichler E.E."/>
            <person name="Green E.D."/>
            <person name="Waterston R.H."/>
            <person name="Wilson R.K."/>
        </authorList>
    </citation>
    <scope>NUCLEOTIDE SEQUENCE [LARGE SCALE GENOMIC DNA]</scope>
</reference>
<reference key="6">
    <citation type="journal article" date="2003" name="Science">
        <title>Human chromosome 7: DNA sequence and biology.</title>
        <authorList>
            <person name="Scherer S.W."/>
            <person name="Cheung J."/>
            <person name="MacDonald J.R."/>
            <person name="Osborne L.R."/>
            <person name="Nakabayashi K."/>
            <person name="Herbrick J.-A."/>
            <person name="Carson A.R."/>
            <person name="Parker-Katiraee L."/>
            <person name="Skaug J."/>
            <person name="Khaja R."/>
            <person name="Zhang J."/>
            <person name="Hudek A.K."/>
            <person name="Li M."/>
            <person name="Haddad M."/>
            <person name="Duggan G.E."/>
            <person name="Fernandez B.A."/>
            <person name="Kanematsu E."/>
            <person name="Gentles S."/>
            <person name="Christopoulos C.C."/>
            <person name="Choufani S."/>
            <person name="Kwasnicka D."/>
            <person name="Zheng X.H."/>
            <person name="Lai Z."/>
            <person name="Nusskern D.R."/>
            <person name="Zhang Q."/>
            <person name="Gu Z."/>
            <person name="Lu F."/>
            <person name="Zeesman S."/>
            <person name="Nowaczyk M.J."/>
            <person name="Teshima I."/>
            <person name="Chitayat D."/>
            <person name="Shuman C."/>
            <person name="Weksberg R."/>
            <person name="Zackai E.H."/>
            <person name="Grebe T.A."/>
            <person name="Cox S.R."/>
            <person name="Kirkpatrick S.J."/>
            <person name="Rahman N."/>
            <person name="Friedman J.M."/>
            <person name="Heng H.H.Q."/>
            <person name="Pelicci P.G."/>
            <person name="Lo-Coco F."/>
            <person name="Belloni E."/>
            <person name="Shaffer L.G."/>
            <person name="Pober B."/>
            <person name="Morton C.C."/>
            <person name="Gusella J.F."/>
            <person name="Bruns G.A.P."/>
            <person name="Korf B.R."/>
            <person name="Quade B.J."/>
            <person name="Ligon A.H."/>
            <person name="Ferguson H."/>
            <person name="Higgins A.W."/>
            <person name="Leach N.T."/>
            <person name="Herrick S.R."/>
            <person name="Lemyre E."/>
            <person name="Farra C.G."/>
            <person name="Kim H.-G."/>
            <person name="Summers A.M."/>
            <person name="Gripp K.W."/>
            <person name="Roberts W."/>
            <person name="Szatmari P."/>
            <person name="Winsor E.J.T."/>
            <person name="Grzeschik K.-H."/>
            <person name="Teebi A."/>
            <person name="Minassian B.A."/>
            <person name="Kere J."/>
            <person name="Armengol L."/>
            <person name="Pujana M.A."/>
            <person name="Estivill X."/>
            <person name="Wilson M.D."/>
            <person name="Koop B.F."/>
            <person name="Tosi S."/>
            <person name="Moore G.E."/>
            <person name="Boright A.P."/>
            <person name="Zlotorynski E."/>
            <person name="Kerem B."/>
            <person name="Kroisel P.M."/>
            <person name="Petek E."/>
            <person name="Oscier D.G."/>
            <person name="Mould S.J."/>
            <person name="Doehner H."/>
            <person name="Doehner K."/>
            <person name="Rommens J.M."/>
            <person name="Vincent J.B."/>
            <person name="Venter J.C."/>
            <person name="Li P.W."/>
            <person name="Mural R.J."/>
            <person name="Adams M.D."/>
            <person name="Tsui L.-C."/>
        </authorList>
    </citation>
    <scope>NUCLEOTIDE SEQUENCE [LARGE SCALE GENOMIC DNA]</scope>
</reference>
<reference key="7">
    <citation type="submission" date="2005-07" db="EMBL/GenBank/DDBJ databases">
        <authorList>
            <person name="Mural R.J."/>
            <person name="Istrail S."/>
            <person name="Sutton G.G."/>
            <person name="Florea L."/>
            <person name="Halpern A.L."/>
            <person name="Mobarry C.M."/>
            <person name="Lippert R."/>
            <person name="Walenz B."/>
            <person name="Shatkay H."/>
            <person name="Dew I."/>
            <person name="Miller J.R."/>
            <person name="Flanigan M.J."/>
            <person name="Edwards N.J."/>
            <person name="Bolanos R."/>
            <person name="Fasulo D."/>
            <person name="Halldorsson B.V."/>
            <person name="Hannenhalli S."/>
            <person name="Turner R."/>
            <person name="Yooseph S."/>
            <person name="Lu F."/>
            <person name="Nusskern D.R."/>
            <person name="Shue B.C."/>
            <person name="Zheng X.H."/>
            <person name="Zhong F."/>
            <person name="Delcher A.L."/>
            <person name="Huson D.H."/>
            <person name="Kravitz S.A."/>
            <person name="Mouchard L."/>
            <person name="Reinert K."/>
            <person name="Remington K.A."/>
            <person name="Clark A.G."/>
            <person name="Waterman M.S."/>
            <person name="Eichler E.E."/>
            <person name="Adams M.D."/>
            <person name="Hunkapiller M.W."/>
            <person name="Myers E.W."/>
            <person name="Venter J.C."/>
        </authorList>
    </citation>
    <scope>NUCLEOTIDE SEQUENCE [LARGE SCALE GENOMIC DNA]</scope>
</reference>
<reference key="8">
    <citation type="journal article" date="2004" name="Genome Res.">
        <title>The status, quality, and expansion of the NIH full-length cDNA project: the Mammalian Gene Collection (MGC).</title>
        <authorList>
            <consortium name="The MGC Project Team"/>
        </authorList>
    </citation>
    <scope>NUCLEOTIDE SEQUENCE [LARGE SCALE MRNA] (ISOFORM 2)</scope>
    <scope>NUCLEOTIDE SEQUENCE [LARGE SCALE MRNA] OF 7-871 (ISOFORM 1)</scope>
    <source>
        <tissue>Brain</tissue>
        <tissue>Eye</tissue>
    </source>
</reference>
<reference key="9">
    <citation type="journal article" date="2011" name="BMC Syst. Biol.">
        <title>Initial characterization of the human central proteome.</title>
        <authorList>
            <person name="Burkard T.R."/>
            <person name="Planyavsky M."/>
            <person name="Kaupe I."/>
            <person name="Breitwieser F.P."/>
            <person name="Buerckstuemmer T."/>
            <person name="Bennett K.L."/>
            <person name="Superti-Furga G."/>
            <person name="Colinge J."/>
        </authorList>
    </citation>
    <scope>IDENTIFICATION BY MASS SPECTROMETRY [LARGE SCALE ANALYSIS]</scope>
</reference>
<reference key="10">
    <citation type="journal article" date="2013" name="J. Proteome Res.">
        <title>Toward a comprehensive characterization of a human cancer cell phosphoproteome.</title>
        <authorList>
            <person name="Zhou H."/>
            <person name="Di Palma S."/>
            <person name="Preisinger C."/>
            <person name="Peng M."/>
            <person name="Polat A.N."/>
            <person name="Heck A.J."/>
            <person name="Mohammed S."/>
        </authorList>
    </citation>
    <scope>IDENTIFICATION BY MASS SPECTROMETRY [LARGE SCALE ANALYSIS]</scope>
    <source>
        <tissue>Erythroleukemia</tissue>
    </source>
</reference>
<reference key="11">
    <citation type="journal article" date="2014" name="Nat. Genet.">
        <title>JAGN1 deficiency causes aberrant myeloid cell homeostasis and congenital neutropenia.</title>
        <authorList>
            <person name="Boztug K."/>
            <person name="Jaervinen P.M."/>
            <person name="Salzer E."/>
            <person name="Racek T."/>
            <person name="Moench S."/>
            <person name="Garncarz W."/>
            <person name="Gertz E.M."/>
            <person name="Schaeffer A.A."/>
            <person name="Antonopoulos A."/>
            <person name="Haslam S.M."/>
            <person name="Schieck L."/>
            <person name="Puchalka J."/>
            <person name="Diestelhorst J."/>
            <person name="Appaswamy G."/>
            <person name="Lescoeur B."/>
            <person name="Giambruno R."/>
            <person name="Bigenzahn J.W."/>
            <person name="Elling U."/>
            <person name="Pfeifer D."/>
            <person name="Conde C.D."/>
            <person name="Albert M.H."/>
            <person name="Welte K."/>
            <person name="Brandes G."/>
            <person name="Sherkat R."/>
            <person name="van der Werff Ten Bosch J."/>
            <person name="Rezaei N."/>
            <person name="Etzioni A."/>
            <person name="Bellanne-Chantelot C."/>
            <person name="Superti-Furga G."/>
            <person name="Penninger J.M."/>
            <person name="Bennett K.L."/>
            <person name="von Blume J."/>
            <person name="Dell A."/>
            <person name="Donadieu J."/>
            <person name="Klein C."/>
        </authorList>
    </citation>
    <scope>INTERACTION WITH JAGN1</scope>
</reference>